<protein>
    <recommendedName>
        <fullName evidence="1">Small ribosomal subunit protein bS20</fullName>
    </recommendedName>
    <alternativeName>
        <fullName evidence="3">30S ribosomal protein S20</fullName>
    </alternativeName>
</protein>
<dbReference type="EMBL" id="CP001157">
    <property type="protein sequence ID" value="ACO80207.1"/>
    <property type="molecule type" value="Genomic_DNA"/>
</dbReference>
<dbReference type="RefSeq" id="WP_012702580.1">
    <property type="nucleotide sequence ID" value="NC_012560.1"/>
</dbReference>
<dbReference type="SMR" id="C1DE99"/>
<dbReference type="STRING" id="322710.Avin_40720"/>
<dbReference type="EnsemblBacteria" id="ACO80207">
    <property type="protein sequence ID" value="ACO80207"/>
    <property type="gene ID" value="Avin_40720"/>
</dbReference>
<dbReference type="GeneID" id="88187011"/>
<dbReference type="KEGG" id="avn:Avin_40720"/>
<dbReference type="eggNOG" id="COG0268">
    <property type="taxonomic scope" value="Bacteria"/>
</dbReference>
<dbReference type="HOGENOM" id="CLU_160655_4_0_6"/>
<dbReference type="OrthoDB" id="9807974at2"/>
<dbReference type="Proteomes" id="UP000002424">
    <property type="component" value="Chromosome"/>
</dbReference>
<dbReference type="GO" id="GO:0005829">
    <property type="term" value="C:cytosol"/>
    <property type="evidence" value="ECO:0007669"/>
    <property type="project" value="TreeGrafter"/>
</dbReference>
<dbReference type="GO" id="GO:0015935">
    <property type="term" value="C:small ribosomal subunit"/>
    <property type="evidence" value="ECO:0007669"/>
    <property type="project" value="TreeGrafter"/>
</dbReference>
<dbReference type="GO" id="GO:0070181">
    <property type="term" value="F:small ribosomal subunit rRNA binding"/>
    <property type="evidence" value="ECO:0007669"/>
    <property type="project" value="TreeGrafter"/>
</dbReference>
<dbReference type="GO" id="GO:0003735">
    <property type="term" value="F:structural constituent of ribosome"/>
    <property type="evidence" value="ECO:0007669"/>
    <property type="project" value="InterPro"/>
</dbReference>
<dbReference type="GO" id="GO:0006412">
    <property type="term" value="P:translation"/>
    <property type="evidence" value="ECO:0007669"/>
    <property type="project" value="UniProtKB-UniRule"/>
</dbReference>
<dbReference type="FunFam" id="1.20.58.110:FF:000001">
    <property type="entry name" value="30S ribosomal protein S20"/>
    <property type="match status" value="1"/>
</dbReference>
<dbReference type="Gene3D" id="1.20.58.110">
    <property type="entry name" value="Ribosomal protein S20"/>
    <property type="match status" value="1"/>
</dbReference>
<dbReference type="HAMAP" id="MF_00500">
    <property type="entry name" value="Ribosomal_bS20"/>
    <property type="match status" value="1"/>
</dbReference>
<dbReference type="InterPro" id="IPR002583">
    <property type="entry name" value="Ribosomal_bS20"/>
</dbReference>
<dbReference type="InterPro" id="IPR036510">
    <property type="entry name" value="Ribosomal_bS20_sf"/>
</dbReference>
<dbReference type="NCBIfam" id="TIGR00029">
    <property type="entry name" value="S20"/>
    <property type="match status" value="1"/>
</dbReference>
<dbReference type="PANTHER" id="PTHR33398">
    <property type="entry name" value="30S RIBOSOMAL PROTEIN S20"/>
    <property type="match status" value="1"/>
</dbReference>
<dbReference type="PANTHER" id="PTHR33398:SF1">
    <property type="entry name" value="SMALL RIBOSOMAL SUBUNIT PROTEIN BS20C"/>
    <property type="match status" value="1"/>
</dbReference>
<dbReference type="Pfam" id="PF01649">
    <property type="entry name" value="Ribosomal_S20p"/>
    <property type="match status" value="1"/>
</dbReference>
<dbReference type="SUPFAM" id="SSF46992">
    <property type="entry name" value="Ribosomal protein S20"/>
    <property type="match status" value="1"/>
</dbReference>
<comment type="function">
    <text evidence="1">Binds directly to 16S ribosomal RNA.</text>
</comment>
<comment type="similarity">
    <text evidence="1">Belongs to the bacterial ribosomal protein bS20 family.</text>
</comment>
<name>RS20_AZOVD</name>
<feature type="chain" id="PRO_1000206489" description="Small ribosomal subunit protein bS20">
    <location>
        <begin position="1"/>
        <end position="91"/>
    </location>
</feature>
<feature type="region of interest" description="Disordered" evidence="2">
    <location>
        <begin position="1"/>
        <end position="25"/>
    </location>
</feature>
<feature type="compositionally biased region" description="Basic residues" evidence="2">
    <location>
        <begin position="7"/>
        <end position="20"/>
    </location>
</feature>
<proteinExistence type="inferred from homology"/>
<gene>
    <name evidence="1" type="primary">rpsT</name>
    <name type="ordered locus">Avin_40720</name>
</gene>
<organism>
    <name type="scientific">Azotobacter vinelandii (strain DJ / ATCC BAA-1303)</name>
    <dbReference type="NCBI Taxonomy" id="322710"/>
    <lineage>
        <taxon>Bacteria</taxon>
        <taxon>Pseudomonadati</taxon>
        <taxon>Pseudomonadota</taxon>
        <taxon>Gammaproteobacteria</taxon>
        <taxon>Pseudomonadales</taxon>
        <taxon>Pseudomonadaceae</taxon>
        <taxon>Azotobacter</taxon>
    </lineage>
</organism>
<accession>C1DE99</accession>
<reference key="1">
    <citation type="journal article" date="2009" name="J. Bacteriol.">
        <title>Genome sequence of Azotobacter vinelandii, an obligate aerobe specialized to support diverse anaerobic metabolic processes.</title>
        <authorList>
            <person name="Setubal J.C."/>
            <person name="Dos Santos P."/>
            <person name="Goldman B.S."/>
            <person name="Ertesvaag H."/>
            <person name="Espin G."/>
            <person name="Rubio L.M."/>
            <person name="Valla S."/>
            <person name="Almeida N.F."/>
            <person name="Balasubramanian D."/>
            <person name="Cromes L."/>
            <person name="Curatti L."/>
            <person name="Du Z."/>
            <person name="Godsy E."/>
            <person name="Goodner B."/>
            <person name="Hellner-Burris K."/>
            <person name="Hernandez J.A."/>
            <person name="Houmiel K."/>
            <person name="Imperial J."/>
            <person name="Kennedy C."/>
            <person name="Larson T.J."/>
            <person name="Latreille P."/>
            <person name="Ligon L.S."/>
            <person name="Lu J."/>
            <person name="Maerk M."/>
            <person name="Miller N.M."/>
            <person name="Norton S."/>
            <person name="O'Carroll I.P."/>
            <person name="Paulsen I."/>
            <person name="Raulfs E.C."/>
            <person name="Roemer R."/>
            <person name="Rosser J."/>
            <person name="Segura D."/>
            <person name="Slater S."/>
            <person name="Stricklin S.L."/>
            <person name="Studholme D.J."/>
            <person name="Sun J."/>
            <person name="Viana C.J."/>
            <person name="Wallin E."/>
            <person name="Wang B."/>
            <person name="Wheeler C."/>
            <person name="Zhu H."/>
            <person name="Dean D.R."/>
            <person name="Dixon R."/>
            <person name="Wood D."/>
        </authorList>
    </citation>
    <scope>NUCLEOTIDE SEQUENCE [LARGE SCALE GENOMIC DNA]</scope>
    <source>
        <strain>DJ / ATCC BAA-1303</strain>
    </source>
</reference>
<sequence>MANSPSAKKRAKQAEKRRSHNASLRSMVRTYIKNVVKAIDAKDLDKAKTAYTAAVPVIDRMADKGIIHKNKAARHKSRLNAHIKALGTAAA</sequence>
<keyword id="KW-0687">Ribonucleoprotein</keyword>
<keyword id="KW-0689">Ribosomal protein</keyword>
<keyword id="KW-0694">RNA-binding</keyword>
<keyword id="KW-0699">rRNA-binding</keyword>
<evidence type="ECO:0000255" key="1">
    <source>
        <dbReference type="HAMAP-Rule" id="MF_00500"/>
    </source>
</evidence>
<evidence type="ECO:0000256" key="2">
    <source>
        <dbReference type="SAM" id="MobiDB-lite"/>
    </source>
</evidence>
<evidence type="ECO:0000305" key="3"/>